<name>YP68_CAEEL</name>
<organism>
    <name type="scientific">Caenorhabditis elegans</name>
    <dbReference type="NCBI Taxonomy" id="6239"/>
    <lineage>
        <taxon>Eukaryota</taxon>
        <taxon>Metazoa</taxon>
        <taxon>Ecdysozoa</taxon>
        <taxon>Nematoda</taxon>
        <taxon>Chromadorea</taxon>
        <taxon>Rhabditida</taxon>
        <taxon>Rhabditina</taxon>
        <taxon>Rhabditomorpha</taxon>
        <taxon>Rhabditoidea</taxon>
        <taxon>Rhabditidae</taxon>
        <taxon>Peloderinae</taxon>
        <taxon>Caenorhabditis</taxon>
    </lineage>
</organism>
<feature type="chain" id="PRO_0000065089" description="LUC7-related splicing factor homolog">
    <location>
        <begin position="1"/>
        <end position="313"/>
    </location>
</feature>
<feature type="region of interest" description="Disordered" evidence="1">
    <location>
        <begin position="237"/>
        <end position="313"/>
    </location>
</feature>
<reference key="1">
    <citation type="journal article" date="1998" name="Science">
        <title>Genome sequence of the nematode C. elegans: a platform for investigating biology.</title>
        <authorList>
            <consortium name="The C. elegans sequencing consortium"/>
        </authorList>
    </citation>
    <scope>NUCLEOTIDE SEQUENCE [LARGE SCALE GENOMIC DNA]</scope>
    <source>
        <strain>Bristol N2</strain>
    </source>
</reference>
<evidence type="ECO:0000256" key="1">
    <source>
        <dbReference type="SAM" id="MobiDB-lite"/>
    </source>
</evidence>
<evidence type="ECO:0000305" key="2"/>
<evidence type="ECO:0000312" key="3">
    <source>
        <dbReference type="WormBase" id="B0495.8a"/>
    </source>
</evidence>
<proteinExistence type="inferred from homology"/>
<comment type="similarity">
    <text evidence="2">Belongs to the Luc7 family.</text>
</comment>
<gene>
    <name evidence="3" type="primary">luc-7L</name>
    <name type="ORF">B0495.8</name>
</gene>
<accession>Q09217</accession>
<protein>
    <recommendedName>
        <fullName evidence="3">LUC7-related splicing factor homolog</fullName>
    </recommendedName>
</protein>
<dbReference type="EMBL" id="FO080132">
    <property type="protein sequence ID" value="CCD61476.1"/>
    <property type="molecule type" value="Genomic_DNA"/>
</dbReference>
<dbReference type="PIR" id="E88216">
    <property type="entry name" value="E88216"/>
</dbReference>
<dbReference type="SMR" id="Q09217"/>
<dbReference type="BioGRID" id="39580">
    <property type="interactions" value="2"/>
</dbReference>
<dbReference type="FunCoup" id="Q09217">
    <property type="interactions" value="2751"/>
</dbReference>
<dbReference type="STRING" id="6239.B0495.8a.1"/>
<dbReference type="PaxDb" id="6239-B0495.8a"/>
<dbReference type="PeptideAtlas" id="Q09217"/>
<dbReference type="EnsemblMetazoa" id="B0495.8a.1">
    <property type="protein sequence ID" value="B0495.8a.1"/>
    <property type="gene ID" value="WBGene00015207"/>
</dbReference>
<dbReference type="KEGG" id="cel:CELE_B0495.8"/>
<dbReference type="UCSC" id="B0495.8a">
    <property type="organism name" value="c. elegans"/>
</dbReference>
<dbReference type="AGR" id="WB:WBGene00015207"/>
<dbReference type="CTD" id="174246"/>
<dbReference type="WormBase" id="B0495.8a">
    <property type="protein sequence ID" value="CE01766"/>
    <property type="gene ID" value="WBGene00015207"/>
    <property type="gene designation" value="luc-7L"/>
</dbReference>
<dbReference type="eggNOG" id="KOG0796">
    <property type="taxonomic scope" value="Eukaryota"/>
</dbReference>
<dbReference type="GeneTree" id="ENSGT00950000183213"/>
<dbReference type="HOGENOM" id="CLU_030397_3_1_1"/>
<dbReference type="InParanoid" id="Q09217"/>
<dbReference type="OMA" id="CPHELFP"/>
<dbReference type="OrthoDB" id="153872at2759"/>
<dbReference type="PhylomeDB" id="Q09217"/>
<dbReference type="PRO" id="PR:Q09217"/>
<dbReference type="Proteomes" id="UP000001940">
    <property type="component" value="Chromosome II"/>
</dbReference>
<dbReference type="Bgee" id="WBGene00015207">
    <property type="expression patterns" value="Expressed in pharyngeal muscle cell (C elegans) and 4 other cell types or tissues"/>
</dbReference>
<dbReference type="ExpressionAtlas" id="Q09217">
    <property type="expression patterns" value="baseline and differential"/>
</dbReference>
<dbReference type="GO" id="GO:0005685">
    <property type="term" value="C:U1 snRNP"/>
    <property type="evidence" value="ECO:0000318"/>
    <property type="project" value="GO_Central"/>
</dbReference>
<dbReference type="GO" id="GO:0071004">
    <property type="term" value="C:U2-type prespliceosome"/>
    <property type="evidence" value="ECO:0000318"/>
    <property type="project" value="GO_Central"/>
</dbReference>
<dbReference type="GO" id="GO:0003729">
    <property type="term" value="F:mRNA binding"/>
    <property type="evidence" value="ECO:0000318"/>
    <property type="project" value="GO_Central"/>
</dbReference>
<dbReference type="GO" id="GO:0006376">
    <property type="term" value="P:mRNA splice site recognition"/>
    <property type="evidence" value="ECO:0000318"/>
    <property type="project" value="GO_Central"/>
</dbReference>
<dbReference type="InterPro" id="IPR004882">
    <property type="entry name" value="Luc7-rel"/>
</dbReference>
<dbReference type="PANTHER" id="PTHR12375">
    <property type="entry name" value="RNA-BINDING PROTEIN LUC7-RELATED"/>
    <property type="match status" value="1"/>
</dbReference>
<dbReference type="Pfam" id="PF03194">
    <property type="entry name" value="LUC7"/>
    <property type="match status" value="1"/>
</dbReference>
<sequence length="313" mass="36977">MTDQMRDMIAQLMGSQHVDNKEKPSMPFDHHSVCRAFLLGVCPHDMVPDSRLQNVVSCRKVHEPAHKADYERAQKEKDHFYDVDAFEIIEHAVHLVDIEIAKVREKLEDDVKTQTSQAADSKAKQVAEIEEKIAKNVDDIEKLGNEGKIEESMKLHKYVEELREKIQEIEDSQTEVKTAGPGSNSAKLRVCEDCGAQLNITDHESRIADHYNGKMHIGMVETRETYLKMKETIDERRKEREEKLGSQRGYQRRESYGRRDRGGDRGEYRGDRDRDRRNRDRSRSRDRSYRRDDRGDRRYDRDNRDRRDRDRRY</sequence>
<keyword id="KW-1185">Reference proteome</keyword>